<evidence type="ECO:0000250" key="1">
    <source>
        <dbReference type="UniProtKB" id="P62891"/>
    </source>
</evidence>
<evidence type="ECO:0000250" key="2">
    <source>
        <dbReference type="UniProtKB" id="P62892"/>
    </source>
</evidence>
<evidence type="ECO:0000305" key="3"/>
<gene>
    <name type="primary">RPL39</name>
</gene>
<organism>
    <name type="scientific">Bos taurus</name>
    <name type="common">Bovine</name>
    <dbReference type="NCBI Taxonomy" id="9913"/>
    <lineage>
        <taxon>Eukaryota</taxon>
        <taxon>Metazoa</taxon>
        <taxon>Chordata</taxon>
        <taxon>Craniata</taxon>
        <taxon>Vertebrata</taxon>
        <taxon>Euteleostomi</taxon>
        <taxon>Mammalia</taxon>
        <taxon>Eutheria</taxon>
        <taxon>Laurasiatheria</taxon>
        <taxon>Artiodactyla</taxon>
        <taxon>Ruminantia</taxon>
        <taxon>Pecora</taxon>
        <taxon>Bovidae</taxon>
        <taxon>Bovinae</taxon>
        <taxon>Bos</taxon>
    </lineage>
</organism>
<protein>
    <recommendedName>
        <fullName evidence="3">Large ribosomal subunit protein eL39</fullName>
    </recommendedName>
    <alternativeName>
        <fullName>60S ribosomal protein L39</fullName>
    </alternativeName>
</protein>
<reference key="1">
    <citation type="submission" date="2007-07" db="EMBL/GenBank/DDBJ databases">
        <authorList>
            <consortium name="NIH - Mammalian Gene Collection (MGC) project"/>
        </authorList>
    </citation>
    <scope>NUCLEOTIDE SEQUENCE [LARGE SCALE MRNA]</scope>
    <source>
        <strain>Hereford</strain>
        <tissue>Testis</tissue>
        <tissue>Thymus</tissue>
    </source>
</reference>
<name>RL39_BOVIN</name>
<feature type="chain" id="PRO_0000240154" description="Large ribosomal subunit protein eL39">
    <location>
        <begin position="1"/>
        <end position="51"/>
    </location>
</feature>
<keyword id="KW-0963">Cytoplasm</keyword>
<keyword id="KW-1185">Reference proteome</keyword>
<keyword id="KW-0687">Ribonucleoprotein</keyword>
<keyword id="KW-0689">Ribosomal protein</keyword>
<comment type="function">
    <text evidence="1">RNA-binding component of the large ribosomal subunit. The ribosome is a large ribonucleoprotein complex responsible for the synthesis of proteins in the cell.</text>
</comment>
<comment type="subunit">
    <text evidence="1 2">Component of the large ribosomal subunit (By similarity). Interacts with IMPACT (By similarity).</text>
</comment>
<comment type="subcellular location">
    <subcellularLocation>
        <location evidence="1">Cytoplasm</location>
    </subcellularLocation>
</comment>
<comment type="similarity">
    <text evidence="3">Belongs to the eukaryotic ribosomal protein eL39 family.</text>
</comment>
<proteinExistence type="inferred from homology"/>
<accession>Q3T051</accession>
<accession>A8E4Q2</accession>
<sequence>MSSHKTFRIKRFLAKKQKQNRPIPQWIRMKTGNKIRYNSKRRHWRRTKLGL</sequence>
<dbReference type="EMBL" id="BC102562">
    <property type="protein sequence ID" value="AAI02563.1"/>
    <property type="molecule type" value="mRNA"/>
</dbReference>
<dbReference type="EMBL" id="BC151476">
    <property type="protein sequence ID" value="AAI51477.1"/>
    <property type="molecule type" value="mRNA"/>
</dbReference>
<dbReference type="RefSeq" id="NP_001098925.1">
    <property type="nucleotide sequence ID" value="NM_001105455.1"/>
</dbReference>
<dbReference type="RefSeq" id="XP_010798833.1">
    <property type="nucleotide sequence ID" value="XM_010800531.2"/>
</dbReference>
<dbReference type="RefSeq" id="XP_010820978.1">
    <property type="nucleotide sequence ID" value="XM_010822676.2"/>
</dbReference>
<dbReference type="SMR" id="Q3T051"/>
<dbReference type="FunCoup" id="Q3T051">
    <property type="interactions" value="1497"/>
</dbReference>
<dbReference type="STRING" id="9913.ENSBTAP00000046223"/>
<dbReference type="PaxDb" id="9913-ENSBTAP00000046223"/>
<dbReference type="Ensembl" id="ENSBTAT00000049315.3">
    <property type="protein sequence ID" value="ENSBTAP00000046223.1"/>
    <property type="gene ID" value="ENSBTAG00000034844.3"/>
</dbReference>
<dbReference type="Ensembl" id="ENSBTAT00000064702.2">
    <property type="protein sequence ID" value="ENSBTAP00000054413.1"/>
    <property type="gene ID" value="ENSBTAG00000047136.2"/>
</dbReference>
<dbReference type="Ensembl" id="ENSBTAT00000083996.1">
    <property type="protein sequence ID" value="ENSBTAP00000070654.1"/>
    <property type="gene ID" value="ENSBTAG00000049441.1"/>
</dbReference>
<dbReference type="GeneID" id="767908"/>
<dbReference type="KEGG" id="bta:101902490"/>
<dbReference type="KEGG" id="bta:101907518"/>
<dbReference type="KEGG" id="bta:767908"/>
<dbReference type="CTD" id="6170"/>
<dbReference type="VEuPathDB" id="HostDB:ENSBTAG00000034844"/>
<dbReference type="VEuPathDB" id="HostDB:ENSBTAG00000047136"/>
<dbReference type="VEuPathDB" id="HostDB:ENSBTAG00000049441"/>
<dbReference type="VEuPathDB" id="HostDB:ENSBTAG00000049833"/>
<dbReference type="VEuPathDB" id="HostDB:ENSBTAG00000054083"/>
<dbReference type="VEuPathDB" id="HostDB:ENSBTAG00000054736"/>
<dbReference type="eggNOG" id="KOG0002">
    <property type="taxonomic scope" value="Eukaryota"/>
</dbReference>
<dbReference type="GeneTree" id="ENSGT00390000014814"/>
<dbReference type="HOGENOM" id="CLU_181948_3_0_1"/>
<dbReference type="InParanoid" id="Q3T051"/>
<dbReference type="OMA" id="RRTKMNI"/>
<dbReference type="OrthoDB" id="9854884at2759"/>
<dbReference type="TreeFam" id="TF300223"/>
<dbReference type="Reactome" id="R-BTA-156827">
    <property type="pathway name" value="L13a-mediated translational silencing of Ceruloplasmin expression"/>
</dbReference>
<dbReference type="Reactome" id="R-BTA-1799339">
    <property type="pathway name" value="SRP-dependent cotranslational protein targeting to membrane"/>
</dbReference>
<dbReference type="Reactome" id="R-BTA-6791226">
    <property type="pathway name" value="Major pathway of rRNA processing in the nucleolus and cytosol"/>
</dbReference>
<dbReference type="Reactome" id="R-BTA-72689">
    <property type="pathway name" value="Formation of a pool of free 40S subunits"/>
</dbReference>
<dbReference type="Reactome" id="R-BTA-72706">
    <property type="pathway name" value="GTP hydrolysis and joining of the 60S ribosomal subunit"/>
</dbReference>
<dbReference type="Reactome" id="R-BTA-975956">
    <property type="pathway name" value="Nonsense Mediated Decay (NMD) independent of the Exon Junction Complex (EJC)"/>
</dbReference>
<dbReference type="Reactome" id="R-BTA-975957">
    <property type="pathway name" value="Nonsense Mediated Decay (NMD) enhanced by the Exon Junction Complex (EJC)"/>
</dbReference>
<dbReference type="Proteomes" id="UP000009136">
    <property type="component" value="Chromosome 14"/>
</dbReference>
<dbReference type="Proteomes" id="UP000009136">
    <property type="component" value="Chromosome 6"/>
</dbReference>
<dbReference type="Proteomes" id="UP000009136">
    <property type="component" value="Chromosome X"/>
</dbReference>
<dbReference type="Bgee" id="ENSBTAG00000034844">
    <property type="expression patterns" value="Expressed in retropharyngeal lymph node and 48 other cell types or tissues"/>
</dbReference>
<dbReference type="GO" id="GO:0022625">
    <property type="term" value="C:cytosolic large ribosomal subunit"/>
    <property type="evidence" value="ECO:0000318"/>
    <property type="project" value="GO_Central"/>
</dbReference>
<dbReference type="GO" id="GO:0003735">
    <property type="term" value="F:structural constituent of ribosome"/>
    <property type="evidence" value="ECO:0007669"/>
    <property type="project" value="InterPro"/>
</dbReference>
<dbReference type="GO" id="GO:0006412">
    <property type="term" value="P:translation"/>
    <property type="evidence" value="ECO:0007669"/>
    <property type="project" value="InterPro"/>
</dbReference>
<dbReference type="FunFam" id="1.10.1620.10:FF:000001">
    <property type="entry name" value="60S ribosomal protein-like L39"/>
    <property type="match status" value="1"/>
</dbReference>
<dbReference type="Gene3D" id="1.10.1620.10">
    <property type="entry name" value="Ribosomal protein L39e"/>
    <property type="match status" value="1"/>
</dbReference>
<dbReference type="HAMAP" id="MF_00629">
    <property type="entry name" value="Ribosomal_eL39"/>
    <property type="match status" value="1"/>
</dbReference>
<dbReference type="InterPro" id="IPR000077">
    <property type="entry name" value="Ribosomal_eL39"/>
</dbReference>
<dbReference type="InterPro" id="IPR020083">
    <property type="entry name" value="Ribosomal_eL39_CS"/>
</dbReference>
<dbReference type="InterPro" id="IPR023626">
    <property type="entry name" value="Ribosomal_eL39_dom_sf"/>
</dbReference>
<dbReference type="PANTHER" id="PTHR19970:SF0">
    <property type="entry name" value="LARGE RIBOSOMAL SUBUNIT PROTEIN EL39"/>
    <property type="match status" value="1"/>
</dbReference>
<dbReference type="PANTHER" id="PTHR19970">
    <property type="entry name" value="RIBOSOMAL PROTEIN L39E"/>
    <property type="match status" value="1"/>
</dbReference>
<dbReference type="Pfam" id="PF00832">
    <property type="entry name" value="Ribosomal_L39"/>
    <property type="match status" value="1"/>
</dbReference>
<dbReference type="SUPFAM" id="SSF48662">
    <property type="entry name" value="Ribosomal protein L39e"/>
    <property type="match status" value="1"/>
</dbReference>
<dbReference type="PROSITE" id="PS00051">
    <property type="entry name" value="RIBOSOMAL_L39E"/>
    <property type="match status" value="1"/>
</dbReference>